<reference key="1">
    <citation type="journal article" date="2004" name="PLoS Biol.">
        <title>Genomic insights into methanotrophy: the complete genome sequence of Methylococcus capsulatus (Bath).</title>
        <authorList>
            <person name="Ward N.L."/>
            <person name="Larsen O."/>
            <person name="Sakwa J."/>
            <person name="Bruseth L."/>
            <person name="Khouri H.M."/>
            <person name="Durkin A.S."/>
            <person name="Dimitrov G."/>
            <person name="Jiang L."/>
            <person name="Scanlan D."/>
            <person name="Kang K.H."/>
            <person name="Lewis M.R."/>
            <person name="Nelson K.E."/>
            <person name="Methe B.A."/>
            <person name="Wu M."/>
            <person name="Heidelberg J.F."/>
            <person name="Paulsen I.T."/>
            <person name="Fouts D.E."/>
            <person name="Ravel J."/>
            <person name="Tettelin H."/>
            <person name="Ren Q."/>
            <person name="Read T.D."/>
            <person name="DeBoy R.T."/>
            <person name="Seshadri R."/>
            <person name="Salzberg S.L."/>
            <person name="Jensen H.B."/>
            <person name="Birkeland N.K."/>
            <person name="Nelson W.C."/>
            <person name="Dodson R.J."/>
            <person name="Grindhaug S.H."/>
            <person name="Holt I.E."/>
            <person name="Eidhammer I."/>
            <person name="Jonasen I."/>
            <person name="Vanaken S."/>
            <person name="Utterback T.R."/>
            <person name="Feldblyum T.V."/>
            <person name="Fraser C.M."/>
            <person name="Lillehaug J.R."/>
            <person name="Eisen J.A."/>
        </authorList>
    </citation>
    <scope>NUCLEOTIDE SEQUENCE [LARGE SCALE GENOMIC DNA]</scope>
    <source>
        <strain>ATCC 33009 / NCIMB 11132 / Bath</strain>
    </source>
</reference>
<keyword id="KW-0521">NADP</keyword>
<keyword id="KW-0560">Oxidoreductase</keyword>
<keyword id="KW-0627">Porphyrin biosynthesis</keyword>
<keyword id="KW-1185">Reference proteome</keyword>
<dbReference type="EC" id="1.2.1.70" evidence="1"/>
<dbReference type="EMBL" id="AE017282">
    <property type="protein sequence ID" value="AAU92841.1"/>
    <property type="molecule type" value="Genomic_DNA"/>
</dbReference>
<dbReference type="RefSeq" id="WP_010960352.1">
    <property type="nucleotide sequence ID" value="NC_002977.6"/>
</dbReference>
<dbReference type="SMR" id="Q60A20"/>
<dbReference type="STRING" id="243233.MCA1052"/>
<dbReference type="GeneID" id="88223344"/>
<dbReference type="KEGG" id="mca:MCA1052"/>
<dbReference type="eggNOG" id="COG0373">
    <property type="taxonomic scope" value="Bacteria"/>
</dbReference>
<dbReference type="HOGENOM" id="CLU_035113_2_2_6"/>
<dbReference type="UniPathway" id="UPA00251">
    <property type="reaction ID" value="UER00316"/>
</dbReference>
<dbReference type="Proteomes" id="UP000006821">
    <property type="component" value="Chromosome"/>
</dbReference>
<dbReference type="GO" id="GO:0008883">
    <property type="term" value="F:glutamyl-tRNA reductase activity"/>
    <property type="evidence" value="ECO:0007669"/>
    <property type="project" value="UniProtKB-UniRule"/>
</dbReference>
<dbReference type="GO" id="GO:0050661">
    <property type="term" value="F:NADP binding"/>
    <property type="evidence" value="ECO:0007669"/>
    <property type="project" value="InterPro"/>
</dbReference>
<dbReference type="GO" id="GO:0019353">
    <property type="term" value="P:protoporphyrinogen IX biosynthetic process from glutamate"/>
    <property type="evidence" value="ECO:0007669"/>
    <property type="project" value="TreeGrafter"/>
</dbReference>
<dbReference type="CDD" id="cd05213">
    <property type="entry name" value="NAD_bind_Glutamyl_tRNA_reduct"/>
    <property type="match status" value="1"/>
</dbReference>
<dbReference type="FunFam" id="3.30.460.30:FF:000001">
    <property type="entry name" value="Glutamyl-tRNA reductase"/>
    <property type="match status" value="1"/>
</dbReference>
<dbReference type="FunFam" id="3.40.50.720:FF:000031">
    <property type="entry name" value="Glutamyl-tRNA reductase"/>
    <property type="match status" value="1"/>
</dbReference>
<dbReference type="Gene3D" id="3.30.460.30">
    <property type="entry name" value="Glutamyl-tRNA reductase, N-terminal domain"/>
    <property type="match status" value="1"/>
</dbReference>
<dbReference type="Gene3D" id="3.40.50.720">
    <property type="entry name" value="NAD(P)-binding Rossmann-like Domain"/>
    <property type="match status" value="1"/>
</dbReference>
<dbReference type="HAMAP" id="MF_00087">
    <property type="entry name" value="Glu_tRNA_reductase"/>
    <property type="match status" value="1"/>
</dbReference>
<dbReference type="InterPro" id="IPR000343">
    <property type="entry name" value="4pyrrol_synth_GluRdtase"/>
</dbReference>
<dbReference type="InterPro" id="IPR015896">
    <property type="entry name" value="4pyrrol_synth_GluRdtase_dimer"/>
</dbReference>
<dbReference type="InterPro" id="IPR015895">
    <property type="entry name" value="4pyrrol_synth_GluRdtase_N"/>
</dbReference>
<dbReference type="InterPro" id="IPR018214">
    <property type="entry name" value="GluRdtase_CS"/>
</dbReference>
<dbReference type="InterPro" id="IPR036453">
    <property type="entry name" value="GluRdtase_dimer_dom_sf"/>
</dbReference>
<dbReference type="InterPro" id="IPR036343">
    <property type="entry name" value="GluRdtase_N_sf"/>
</dbReference>
<dbReference type="InterPro" id="IPR036291">
    <property type="entry name" value="NAD(P)-bd_dom_sf"/>
</dbReference>
<dbReference type="InterPro" id="IPR006151">
    <property type="entry name" value="Shikm_DH/Glu-tRNA_Rdtase"/>
</dbReference>
<dbReference type="NCBIfam" id="TIGR01035">
    <property type="entry name" value="hemA"/>
    <property type="match status" value="1"/>
</dbReference>
<dbReference type="PANTHER" id="PTHR43013">
    <property type="entry name" value="GLUTAMYL-TRNA REDUCTASE"/>
    <property type="match status" value="1"/>
</dbReference>
<dbReference type="PANTHER" id="PTHR43013:SF1">
    <property type="entry name" value="GLUTAMYL-TRNA REDUCTASE"/>
    <property type="match status" value="1"/>
</dbReference>
<dbReference type="Pfam" id="PF00745">
    <property type="entry name" value="GlutR_dimer"/>
    <property type="match status" value="1"/>
</dbReference>
<dbReference type="Pfam" id="PF05201">
    <property type="entry name" value="GlutR_N"/>
    <property type="match status" value="1"/>
</dbReference>
<dbReference type="Pfam" id="PF01488">
    <property type="entry name" value="Shikimate_DH"/>
    <property type="match status" value="1"/>
</dbReference>
<dbReference type="PIRSF" id="PIRSF000445">
    <property type="entry name" value="4pyrrol_synth_GluRdtase"/>
    <property type="match status" value="1"/>
</dbReference>
<dbReference type="SUPFAM" id="SSF69742">
    <property type="entry name" value="Glutamyl tRNA-reductase catalytic, N-terminal domain"/>
    <property type="match status" value="1"/>
</dbReference>
<dbReference type="SUPFAM" id="SSF69075">
    <property type="entry name" value="Glutamyl tRNA-reductase dimerization domain"/>
    <property type="match status" value="1"/>
</dbReference>
<dbReference type="SUPFAM" id="SSF51735">
    <property type="entry name" value="NAD(P)-binding Rossmann-fold domains"/>
    <property type="match status" value="1"/>
</dbReference>
<dbReference type="PROSITE" id="PS00747">
    <property type="entry name" value="GLUTR"/>
    <property type="match status" value="1"/>
</dbReference>
<feature type="chain" id="PRO_0000114039" description="Glutamyl-tRNA reductase">
    <location>
        <begin position="1"/>
        <end position="420"/>
    </location>
</feature>
<feature type="active site" description="Nucleophile" evidence="1">
    <location>
        <position position="50"/>
    </location>
</feature>
<feature type="binding site" evidence="1">
    <location>
        <begin position="49"/>
        <end position="52"/>
    </location>
    <ligand>
        <name>substrate</name>
    </ligand>
</feature>
<feature type="binding site" evidence="1">
    <location>
        <position position="107"/>
    </location>
    <ligand>
        <name>substrate</name>
    </ligand>
</feature>
<feature type="binding site" evidence="1">
    <location>
        <begin position="112"/>
        <end position="114"/>
    </location>
    <ligand>
        <name>substrate</name>
    </ligand>
</feature>
<feature type="binding site" evidence="1">
    <location>
        <position position="118"/>
    </location>
    <ligand>
        <name>substrate</name>
    </ligand>
</feature>
<feature type="binding site" evidence="1">
    <location>
        <begin position="187"/>
        <end position="192"/>
    </location>
    <ligand>
        <name>NADP(+)</name>
        <dbReference type="ChEBI" id="CHEBI:58349"/>
    </ligand>
</feature>
<feature type="site" description="Important for activity" evidence="1">
    <location>
        <position position="97"/>
    </location>
</feature>
<sequence>MAILTLGVNHTTAPVSIRERLAFPAEQLQSALRDLIDLPQVGEAAILSTCNRTEVYCELDGRDQRPIVDWMCDQRQFDDQDISQYLYSHFDAGTIRHMFRVACGLDSMILGEPQILGQMKTAYQAAREAGTVGKILTKLFHRTFAAAKKVRTDTAIGCSPVSVAFAAIRLAQRIFDDLGDLTAILVGAGETIELTARHLTENRIGHLIIANRTFDRAHTLANQFGGFAISLEELPKHLAKADIIVASTGSPLPILGKGSFESALRSRRHKPMFIVDLAVPRDIEPEVEQLQDVYLYTVDDLQHTVEENLKTRQEAALQAEEIIDLEVEHFLSWLRAQAATETIRDVRRQAELHRDAALQRALRELRRGKSAEDTLRWLADTLTNKIIHAPSSQIWQAGVNERADIVAAARELFQLKDPDT</sequence>
<proteinExistence type="inferred from homology"/>
<accession>Q60A20</accession>
<name>HEM1_METCA</name>
<protein>
    <recommendedName>
        <fullName evidence="1">Glutamyl-tRNA reductase</fullName>
        <shortName evidence="1">GluTR</shortName>
        <ecNumber evidence="1">1.2.1.70</ecNumber>
    </recommendedName>
</protein>
<comment type="function">
    <text evidence="1">Catalyzes the NADPH-dependent reduction of glutamyl-tRNA(Glu) to glutamate 1-semialdehyde (GSA).</text>
</comment>
<comment type="catalytic activity">
    <reaction evidence="1">
        <text>(S)-4-amino-5-oxopentanoate + tRNA(Glu) + NADP(+) = L-glutamyl-tRNA(Glu) + NADPH + H(+)</text>
        <dbReference type="Rhea" id="RHEA:12344"/>
        <dbReference type="Rhea" id="RHEA-COMP:9663"/>
        <dbReference type="Rhea" id="RHEA-COMP:9680"/>
        <dbReference type="ChEBI" id="CHEBI:15378"/>
        <dbReference type="ChEBI" id="CHEBI:57501"/>
        <dbReference type="ChEBI" id="CHEBI:57783"/>
        <dbReference type="ChEBI" id="CHEBI:58349"/>
        <dbReference type="ChEBI" id="CHEBI:78442"/>
        <dbReference type="ChEBI" id="CHEBI:78520"/>
        <dbReference type="EC" id="1.2.1.70"/>
    </reaction>
</comment>
<comment type="pathway">
    <text evidence="1">Porphyrin-containing compound metabolism; protoporphyrin-IX biosynthesis; 5-aminolevulinate from L-glutamyl-tRNA(Glu): step 1/2.</text>
</comment>
<comment type="subunit">
    <text evidence="1">Homodimer.</text>
</comment>
<comment type="domain">
    <text evidence="1">Possesses an unusual extended V-shaped dimeric structure with each monomer consisting of three distinct domains arranged along a curved 'spinal' alpha-helix. The N-terminal catalytic domain specifically recognizes the glutamate moiety of the substrate. The second domain is the NADPH-binding domain, and the third C-terminal domain is responsible for dimerization.</text>
</comment>
<comment type="miscellaneous">
    <text evidence="1">During catalysis, the active site Cys acts as a nucleophile attacking the alpha-carbonyl group of tRNA-bound glutamate with the formation of a thioester intermediate between enzyme and glutamate, and the concomitant release of tRNA(Glu). The thioester intermediate is finally reduced by direct hydride transfer from NADPH, to form the product GSA.</text>
</comment>
<comment type="similarity">
    <text evidence="1">Belongs to the glutamyl-tRNA reductase family.</text>
</comment>
<gene>
    <name evidence="1" type="primary">hemA</name>
    <name type="ordered locus">MCA1052</name>
</gene>
<organism>
    <name type="scientific">Methylococcus capsulatus (strain ATCC 33009 / NCIMB 11132 / Bath)</name>
    <dbReference type="NCBI Taxonomy" id="243233"/>
    <lineage>
        <taxon>Bacteria</taxon>
        <taxon>Pseudomonadati</taxon>
        <taxon>Pseudomonadota</taxon>
        <taxon>Gammaproteobacteria</taxon>
        <taxon>Methylococcales</taxon>
        <taxon>Methylococcaceae</taxon>
        <taxon>Methylococcus</taxon>
    </lineage>
</organism>
<evidence type="ECO:0000255" key="1">
    <source>
        <dbReference type="HAMAP-Rule" id="MF_00087"/>
    </source>
</evidence>